<dbReference type="EC" id="1.1.1.47"/>
<dbReference type="EMBL" id="M12276">
    <property type="protein sequence ID" value="AAA22463.1"/>
    <property type="molecule type" value="Genomic_DNA"/>
</dbReference>
<dbReference type="EMBL" id="D50453">
    <property type="protein sequence ID" value="BAA09024.1"/>
    <property type="molecule type" value="Genomic_DNA"/>
</dbReference>
<dbReference type="EMBL" id="AL009126">
    <property type="protein sequence ID" value="CAB12201.1"/>
    <property type="molecule type" value="Genomic_DNA"/>
</dbReference>
<dbReference type="PIR" id="D69629">
    <property type="entry name" value="D69629"/>
</dbReference>
<dbReference type="RefSeq" id="NP_388275.1">
    <property type="nucleotide sequence ID" value="NC_000964.3"/>
</dbReference>
<dbReference type="RefSeq" id="WP_003246720.1">
    <property type="nucleotide sequence ID" value="NZ_OZ025638.1"/>
</dbReference>
<dbReference type="PDB" id="8W0N">
    <property type="method" value="X-ray"/>
    <property type="resolution" value="1.37 A"/>
    <property type="chains" value="A/B=1-260"/>
</dbReference>
<dbReference type="PDB" id="8W0O">
    <property type="method" value="X-ray"/>
    <property type="resolution" value="1.66 A"/>
    <property type="chains" value="A/B/C/D/E/F/G/H=1-261"/>
</dbReference>
<dbReference type="PDBsum" id="8W0N"/>
<dbReference type="PDBsum" id="8W0O"/>
<dbReference type="SMR" id="P12310"/>
<dbReference type="FunCoup" id="P12310">
    <property type="interactions" value="263"/>
</dbReference>
<dbReference type="STRING" id="224308.BSU03930"/>
<dbReference type="PaxDb" id="224308-BSU03930"/>
<dbReference type="EnsemblBacteria" id="CAB12201">
    <property type="protein sequence ID" value="CAB12201"/>
    <property type="gene ID" value="BSU_03930"/>
</dbReference>
<dbReference type="GeneID" id="938261"/>
<dbReference type="KEGG" id="bsu:BSU03930"/>
<dbReference type="PATRIC" id="fig|224308.179.peg.416"/>
<dbReference type="eggNOG" id="COG1028">
    <property type="taxonomic scope" value="Bacteria"/>
</dbReference>
<dbReference type="InParanoid" id="P12310"/>
<dbReference type="OrthoDB" id="9803333at2"/>
<dbReference type="PhylomeDB" id="P12310"/>
<dbReference type="BioCyc" id="BSUB:BSU03930-MONOMER"/>
<dbReference type="BioCyc" id="MetaCyc:BSU03930-MONOMER"/>
<dbReference type="SABIO-RK" id="P12310"/>
<dbReference type="Proteomes" id="UP000001570">
    <property type="component" value="Chromosome"/>
</dbReference>
<dbReference type="GO" id="GO:0047934">
    <property type="term" value="F:glucose 1-dehydrogenase (NAD+) activity"/>
    <property type="evidence" value="ECO:0007669"/>
    <property type="project" value="RHEA"/>
</dbReference>
<dbReference type="GO" id="GO:0047935">
    <property type="term" value="F:glucose 1-dehydrogenase (NADP+) activity"/>
    <property type="evidence" value="ECO:0007669"/>
    <property type="project" value="RHEA"/>
</dbReference>
<dbReference type="GO" id="GO:0016616">
    <property type="term" value="F:oxidoreductase activity, acting on the CH-OH group of donors, NAD or NADP as acceptor"/>
    <property type="evidence" value="ECO:0000318"/>
    <property type="project" value="GO_Central"/>
</dbReference>
<dbReference type="GO" id="GO:0006629">
    <property type="term" value="P:lipid metabolic process"/>
    <property type="evidence" value="ECO:0007669"/>
    <property type="project" value="UniProtKB-ARBA"/>
</dbReference>
<dbReference type="GO" id="GO:0032787">
    <property type="term" value="P:monocarboxylic acid metabolic process"/>
    <property type="evidence" value="ECO:0007669"/>
    <property type="project" value="UniProtKB-ARBA"/>
</dbReference>
<dbReference type="GO" id="GO:0030435">
    <property type="term" value="P:sporulation resulting in formation of a cellular spore"/>
    <property type="evidence" value="ECO:0007669"/>
    <property type="project" value="UniProtKB-KW"/>
</dbReference>
<dbReference type="CDD" id="cd05358">
    <property type="entry name" value="GlcDH_SDR_c"/>
    <property type="match status" value="1"/>
</dbReference>
<dbReference type="FunFam" id="3.40.50.720:FF:000248">
    <property type="entry name" value="Glucose 1-dehydrogenase"/>
    <property type="match status" value="1"/>
</dbReference>
<dbReference type="Gene3D" id="3.40.50.720">
    <property type="entry name" value="NAD(P)-binding Rossmann-like Domain"/>
    <property type="match status" value="1"/>
</dbReference>
<dbReference type="InterPro" id="IPR036291">
    <property type="entry name" value="NAD(P)-bd_dom_sf"/>
</dbReference>
<dbReference type="InterPro" id="IPR020904">
    <property type="entry name" value="Sc_DH/Rdtase_CS"/>
</dbReference>
<dbReference type="InterPro" id="IPR050259">
    <property type="entry name" value="SDR"/>
</dbReference>
<dbReference type="InterPro" id="IPR002347">
    <property type="entry name" value="SDR_fam"/>
</dbReference>
<dbReference type="NCBIfam" id="NF005559">
    <property type="entry name" value="PRK07231.1"/>
    <property type="match status" value="1"/>
</dbReference>
<dbReference type="NCBIfam" id="NF006493">
    <property type="entry name" value="PRK08936.1"/>
    <property type="match status" value="1"/>
</dbReference>
<dbReference type="PANTHER" id="PTHR42879">
    <property type="entry name" value="3-OXOACYL-(ACYL-CARRIER-PROTEIN) REDUCTASE"/>
    <property type="match status" value="1"/>
</dbReference>
<dbReference type="PANTHER" id="PTHR42879:SF2">
    <property type="entry name" value="3-OXOACYL-[ACYL-CARRIER-PROTEIN] REDUCTASE FABG"/>
    <property type="match status" value="1"/>
</dbReference>
<dbReference type="Pfam" id="PF13561">
    <property type="entry name" value="adh_short_C2"/>
    <property type="match status" value="1"/>
</dbReference>
<dbReference type="PRINTS" id="PR00081">
    <property type="entry name" value="GDHRDH"/>
</dbReference>
<dbReference type="PRINTS" id="PR00080">
    <property type="entry name" value="SDRFAMILY"/>
</dbReference>
<dbReference type="SUPFAM" id="SSF51735">
    <property type="entry name" value="NAD(P)-binding Rossmann-fold domains"/>
    <property type="match status" value="1"/>
</dbReference>
<dbReference type="PROSITE" id="PS00061">
    <property type="entry name" value="ADH_SHORT"/>
    <property type="match status" value="1"/>
</dbReference>
<evidence type="ECO:0000250" key="1"/>
<evidence type="ECO:0000255" key="2">
    <source>
        <dbReference type="PROSITE-ProRule" id="PRU10001"/>
    </source>
</evidence>
<evidence type="ECO:0000305" key="3"/>
<gene>
    <name type="primary">gdh</name>
    <name type="ordered locus">BSU03930</name>
</gene>
<name>DHG_BACSU</name>
<protein>
    <recommendedName>
        <fullName>Glucose 1-dehydrogenase</fullName>
        <ecNumber>1.1.1.47</ecNumber>
    </recommendedName>
</protein>
<keyword id="KW-0002">3D-structure</keyword>
<keyword id="KW-0521">NADP</keyword>
<keyword id="KW-0560">Oxidoreductase</keyword>
<keyword id="KW-1185">Reference proteome</keyword>
<keyword id="KW-0749">Sporulation</keyword>
<comment type="catalytic activity">
    <reaction>
        <text>D-glucose + NAD(+) = D-glucono-1,5-lactone + NADH + H(+)</text>
        <dbReference type="Rhea" id="RHEA:14293"/>
        <dbReference type="ChEBI" id="CHEBI:4167"/>
        <dbReference type="ChEBI" id="CHEBI:15378"/>
        <dbReference type="ChEBI" id="CHEBI:16217"/>
        <dbReference type="ChEBI" id="CHEBI:57540"/>
        <dbReference type="ChEBI" id="CHEBI:57945"/>
        <dbReference type="EC" id="1.1.1.47"/>
    </reaction>
</comment>
<comment type="catalytic activity">
    <reaction>
        <text>D-glucose + NADP(+) = D-glucono-1,5-lactone + NADPH + H(+)</text>
        <dbReference type="Rhea" id="RHEA:14405"/>
        <dbReference type="ChEBI" id="CHEBI:4167"/>
        <dbReference type="ChEBI" id="CHEBI:15378"/>
        <dbReference type="ChEBI" id="CHEBI:16217"/>
        <dbReference type="ChEBI" id="CHEBI:57783"/>
        <dbReference type="ChEBI" id="CHEBI:58349"/>
        <dbReference type="EC" id="1.1.1.47"/>
    </reaction>
</comment>
<comment type="subunit">
    <text>Homotetramer.</text>
</comment>
<comment type="induction">
    <text>Induced at stage III of sporulation.</text>
</comment>
<comment type="similarity">
    <text evidence="3">Belongs to the short-chain dehydrogenases/reductases (SDR) family.</text>
</comment>
<feature type="chain" id="PRO_0000054616" description="Glucose 1-dehydrogenase">
    <location>
        <begin position="1"/>
        <end position="261"/>
    </location>
</feature>
<feature type="active site" description="Proton acceptor" evidence="2">
    <location>
        <position position="158"/>
    </location>
</feature>
<feature type="binding site" evidence="1">
    <location>
        <begin position="11"/>
        <end position="35"/>
    </location>
    <ligand>
        <name>NADP(+)</name>
        <dbReference type="ChEBI" id="CHEBI:58349"/>
    </ligand>
</feature>
<feature type="binding site" evidence="1">
    <location>
        <position position="145"/>
    </location>
    <ligand>
        <name>substrate</name>
    </ligand>
</feature>
<feature type="sequence conflict" description="In Ref. 1; AAA22463." evidence="3" ref="1">
    <original>EVI</original>
    <variation>AF</variation>
    <location>
        <begin position="148"/>
        <end position="150"/>
    </location>
</feature>
<reference key="1">
    <citation type="journal article" date="1986" name="J. Bacteriol.">
        <title>Characterization of the developmentally regulated Bacillus subtilis glucose dehydrogenase gene.</title>
        <authorList>
            <person name="Lampel K.A."/>
            <person name="Uratani B."/>
            <person name="Chaudhry G.R."/>
            <person name="Ramaley R.F."/>
            <person name="Rudikoff S."/>
        </authorList>
    </citation>
    <scope>NUCLEOTIDE SEQUENCE [GENOMIC DNA]</scope>
</reference>
<reference key="2">
    <citation type="journal article" date="1996" name="Microbiology">
        <title>The 25 degrees-36 degrees region of the Bacillus subtilis chromosome: determination of the sequence of a 146 kb segment and identification of 113 genes.</title>
        <authorList>
            <person name="Yamane K."/>
            <person name="Kumano M."/>
            <person name="Kurita K."/>
        </authorList>
    </citation>
    <scope>NUCLEOTIDE SEQUENCE [GENOMIC DNA]</scope>
    <source>
        <strain>168</strain>
    </source>
</reference>
<reference key="3">
    <citation type="journal article" date="1997" name="Nature">
        <title>The complete genome sequence of the Gram-positive bacterium Bacillus subtilis.</title>
        <authorList>
            <person name="Kunst F."/>
            <person name="Ogasawara N."/>
            <person name="Moszer I."/>
            <person name="Albertini A.M."/>
            <person name="Alloni G."/>
            <person name="Azevedo V."/>
            <person name="Bertero M.G."/>
            <person name="Bessieres P."/>
            <person name="Bolotin A."/>
            <person name="Borchert S."/>
            <person name="Borriss R."/>
            <person name="Boursier L."/>
            <person name="Brans A."/>
            <person name="Braun M."/>
            <person name="Brignell S.C."/>
            <person name="Bron S."/>
            <person name="Brouillet S."/>
            <person name="Bruschi C.V."/>
            <person name="Caldwell B."/>
            <person name="Capuano V."/>
            <person name="Carter N.M."/>
            <person name="Choi S.-K."/>
            <person name="Codani J.-J."/>
            <person name="Connerton I.F."/>
            <person name="Cummings N.J."/>
            <person name="Daniel R.A."/>
            <person name="Denizot F."/>
            <person name="Devine K.M."/>
            <person name="Duesterhoeft A."/>
            <person name="Ehrlich S.D."/>
            <person name="Emmerson P.T."/>
            <person name="Entian K.-D."/>
            <person name="Errington J."/>
            <person name="Fabret C."/>
            <person name="Ferrari E."/>
            <person name="Foulger D."/>
            <person name="Fritz C."/>
            <person name="Fujita M."/>
            <person name="Fujita Y."/>
            <person name="Fuma S."/>
            <person name="Galizzi A."/>
            <person name="Galleron N."/>
            <person name="Ghim S.-Y."/>
            <person name="Glaser P."/>
            <person name="Goffeau A."/>
            <person name="Golightly E.J."/>
            <person name="Grandi G."/>
            <person name="Guiseppi G."/>
            <person name="Guy B.J."/>
            <person name="Haga K."/>
            <person name="Haiech J."/>
            <person name="Harwood C.R."/>
            <person name="Henaut A."/>
            <person name="Hilbert H."/>
            <person name="Holsappel S."/>
            <person name="Hosono S."/>
            <person name="Hullo M.-F."/>
            <person name="Itaya M."/>
            <person name="Jones L.-M."/>
            <person name="Joris B."/>
            <person name="Karamata D."/>
            <person name="Kasahara Y."/>
            <person name="Klaerr-Blanchard M."/>
            <person name="Klein C."/>
            <person name="Kobayashi Y."/>
            <person name="Koetter P."/>
            <person name="Koningstein G."/>
            <person name="Krogh S."/>
            <person name="Kumano M."/>
            <person name="Kurita K."/>
            <person name="Lapidus A."/>
            <person name="Lardinois S."/>
            <person name="Lauber J."/>
            <person name="Lazarevic V."/>
            <person name="Lee S.-M."/>
            <person name="Levine A."/>
            <person name="Liu H."/>
            <person name="Masuda S."/>
            <person name="Mauel C."/>
            <person name="Medigue C."/>
            <person name="Medina N."/>
            <person name="Mellado R.P."/>
            <person name="Mizuno M."/>
            <person name="Moestl D."/>
            <person name="Nakai S."/>
            <person name="Noback M."/>
            <person name="Noone D."/>
            <person name="O'Reilly M."/>
            <person name="Ogawa K."/>
            <person name="Ogiwara A."/>
            <person name="Oudega B."/>
            <person name="Park S.-H."/>
            <person name="Parro V."/>
            <person name="Pohl T.M."/>
            <person name="Portetelle D."/>
            <person name="Porwollik S."/>
            <person name="Prescott A.M."/>
            <person name="Presecan E."/>
            <person name="Pujic P."/>
            <person name="Purnelle B."/>
            <person name="Rapoport G."/>
            <person name="Rey M."/>
            <person name="Reynolds S."/>
            <person name="Rieger M."/>
            <person name="Rivolta C."/>
            <person name="Rocha E."/>
            <person name="Roche B."/>
            <person name="Rose M."/>
            <person name="Sadaie Y."/>
            <person name="Sato T."/>
            <person name="Scanlan E."/>
            <person name="Schleich S."/>
            <person name="Schroeter R."/>
            <person name="Scoffone F."/>
            <person name="Sekiguchi J."/>
            <person name="Sekowska A."/>
            <person name="Seror S.J."/>
            <person name="Serror P."/>
            <person name="Shin B.-S."/>
            <person name="Soldo B."/>
            <person name="Sorokin A."/>
            <person name="Tacconi E."/>
            <person name="Takagi T."/>
            <person name="Takahashi H."/>
            <person name="Takemaru K."/>
            <person name="Takeuchi M."/>
            <person name="Tamakoshi A."/>
            <person name="Tanaka T."/>
            <person name="Terpstra P."/>
            <person name="Tognoni A."/>
            <person name="Tosato V."/>
            <person name="Uchiyama S."/>
            <person name="Vandenbol M."/>
            <person name="Vannier F."/>
            <person name="Vassarotti A."/>
            <person name="Viari A."/>
            <person name="Wambutt R."/>
            <person name="Wedler E."/>
            <person name="Wedler H."/>
            <person name="Weitzenegger T."/>
            <person name="Winters P."/>
            <person name="Wipat A."/>
            <person name="Yamamoto H."/>
            <person name="Yamane K."/>
            <person name="Yasumoto K."/>
            <person name="Yata K."/>
            <person name="Yoshida K."/>
            <person name="Yoshikawa H.-F."/>
            <person name="Zumstein E."/>
            <person name="Yoshikawa H."/>
            <person name="Danchin A."/>
        </authorList>
    </citation>
    <scope>NUCLEOTIDE SEQUENCE [LARGE SCALE GENOMIC DNA]</scope>
    <source>
        <strain>168</strain>
    </source>
</reference>
<sequence>MYPDLKGKVVAITGAASGLGKAMAIRFGKEQAKVVINYYSNKQDPNEVKEEVIKAGGEAVVVQGDVTKEEDVKNIVQTAIKEFGTLDIMINNAGLENPVPSHEMPLKDWDKVIGTNLTGAFLGSREAIKYFVENDIKGNVINMSSVHEVIPWPLFVHYAASKGGIKLMTETLALEYAPKGIRVNNIGPGAINTPINAEKFADPKQKADVESMIPMGYIGEPEEIAAVAAWLASKEASYVTGITLFADGGMTQYPSFQAGRG</sequence>
<proteinExistence type="evidence at protein level"/>
<accession>P12310</accession>
<accession>P94430</accession>
<organism>
    <name type="scientific">Bacillus subtilis (strain 168)</name>
    <dbReference type="NCBI Taxonomy" id="224308"/>
    <lineage>
        <taxon>Bacteria</taxon>
        <taxon>Bacillati</taxon>
        <taxon>Bacillota</taxon>
        <taxon>Bacilli</taxon>
        <taxon>Bacillales</taxon>
        <taxon>Bacillaceae</taxon>
        <taxon>Bacillus</taxon>
    </lineage>
</organism>